<feature type="chain" id="PRO_1000188149" description="Small ribosomal subunit biogenesis GTPase RsgA">
    <location>
        <begin position="1"/>
        <end position="301"/>
    </location>
</feature>
<feature type="domain" description="CP-type G" evidence="2">
    <location>
        <begin position="65"/>
        <end position="224"/>
    </location>
</feature>
<feature type="binding site" evidence="1">
    <location>
        <begin position="115"/>
        <end position="118"/>
    </location>
    <ligand>
        <name>GTP</name>
        <dbReference type="ChEBI" id="CHEBI:37565"/>
    </ligand>
</feature>
<feature type="binding site" evidence="1">
    <location>
        <begin position="167"/>
        <end position="175"/>
    </location>
    <ligand>
        <name>GTP</name>
        <dbReference type="ChEBI" id="CHEBI:37565"/>
    </ligand>
</feature>
<feature type="binding site" evidence="1">
    <location>
        <position position="247"/>
    </location>
    <ligand>
        <name>Zn(2+)</name>
        <dbReference type="ChEBI" id="CHEBI:29105"/>
    </ligand>
</feature>
<feature type="binding site" evidence="1">
    <location>
        <position position="252"/>
    </location>
    <ligand>
        <name>Zn(2+)</name>
        <dbReference type="ChEBI" id="CHEBI:29105"/>
    </ligand>
</feature>
<feature type="binding site" evidence="1">
    <location>
        <position position="254"/>
    </location>
    <ligand>
        <name>Zn(2+)</name>
        <dbReference type="ChEBI" id="CHEBI:29105"/>
    </ligand>
</feature>
<feature type="binding site" evidence="1">
    <location>
        <position position="260"/>
    </location>
    <ligand>
        <name>Zn(2+)</name>
        <dbReference type="ChEBI" id="CHEBI:29105"/>
    </ligand>
</feature>
<gene>
    <name evidence="1" type="primary">rsgA</name>
    <name type="ordered locus">UUR10_0211</name>
</gene>
<reference key="1">
    <citation type="submission" date="2008-10" db="EMBL/GenBank/DDBJ databases">
        <title>Genome sequence of Ureaplasma urealyticum serovar 10 ATCC-33699.</title>
        <authorList>
            <person name="Shrivastava S."/>
            <person name="Methe B.A."/>
            <person name="Glass J."/>
            <person name="White K."/>
            <person name="Duffy L.B."/>
        </authorList>
    </citation>
    <scope>NUCLEOTIDE SEQUENCE [LARGE SCALE GENOMIC DNA]</scope>
    <source>
        <strain>ATCC 33699 / Western</strain>
    </source>
</reference>
<name>RSGA_UREU1</name>
<evidence type="ECO:0000255" key="1">
    <source>
        <dbReference type="HAMAP-Rule" id="MF_01820"/>
    </source>
</evidence>
<evidence type="ECO:0000255" key="2">
    <source>
        <dbReference type="PROSITE-ProRule" id="PRU01058"/>
    </source>
</evidence>
<organism>
    <name type="scientific">Ureaplasma urealyticum serovar 10 (strain ATCC 33699 / Western)</name>
    <dbReference type="NCBI Taxonomy" id="565575"/>
    <lineage>
        <taxon>Bacteria</taxon>
        <taxon>Bacillati</taxon>
        <taxon>Mycoplasmatota</taxon>
        <taxon>Mycoplasmoidales</taxon>
        <taxon>Mycoplasmoidaceae</taxon>
        <taxon>Ureaplasma</taxon>
    </lineage>
</organism>
<comment type="function">
    <text evidence="1">One of several proteins that assist in the late maturation steps of the functional core of the 30S ribosomal subunit. Helps release RbfA from mature subunits. May play a role in the assembly of ribosomal proteins into the subunit. Circularly permuted GTPase that catalyzes slow GTP hydrolysis, GTPase activity is stimulated by the 30S ribosomal subunit.</text>
</comment>
<comment type="cofactor">
    <cofactor evidence="1">
        <name>Zn(2+)</name>
        <dbReference type="ChEBI" id="CHEBI:29105"/>
    </cofactor>
    <text evidence="1">Binds 1 zinc ion per subunit.</text>
</comment>
<comment type="subunit">
    <text evidence="1">Monomer. Associates with 30S ribosomal subunit, binds 16S rRNA.</text>
</comment>
<comment type="subcellular location">
    <subcellularLocation>
        <location evidence="1">Cytoplasm</location>
    </subcellularLocation>
</comment>
<comment type="similarity">
    <text evidence="1">Belongs to the TRAFAC class YlqF/YawG GTPase family. RsgA subfamily.</text>
</comment>
<dbReference type="EC" id="3.6.1.-" evidence="1"/>
<dbReference type="EMBL" id="CP001184">
    <property type="protein sequence ID" value="ACI60223.1"/>
    <property type="molecule type" value="Genomic_DNA"/>
</dbReference>
<dbReference type="RefSeq" id="WP_004025802.1">
    <property type="nucleotide sequence ID" value="NC_011374.1"/>
</dbReference>
<dbReference type="SMR" id="B5ZB25"/>
<dbReference type="STRING" id="565575.UUR10_0211"/>
<dbReference type="GeneID" id="93848691"/>
<dbReference type="KEGG" id="uue:UUR10_0211"/>
<dbReference type="eggNOG" id="COG1162">
    <property type="taxonomic scope" value="Bacteria"/>
</dbReference>
<dbReference type="HOGENOM" id="CLU_033617_2_1_14"/>
<dbReference type="OrthoDB" id="9809485at2"/>
<dbReference type="Proteomes" id="UP000002018">
    <property type="component" value="Chromosome"/>
</dbReference>
<dbReference type="GO" id="GO:0005737">
    <property type="term" value="C:cytoplasm"/>
    <property type="evidence" value="ECO:0007669"/>
    <property type="project" value="UniProtKB-SubCell"/>
</dbReference>
<dbReference type="GO" id="GO:0005525">
    <property type="term" value="F:GTP binding"/>
    <property type="evidence" value="ECO:0007669"/>
    <property type="project" value="UniProtKB-UniRule"/>
</dbReference>
<dbReference type="GO" id="GO:0003924">
    <property type="term" value="F:GTPase activity"/>
    <property type="evidence" value="ECO:0007669"/>
    <property type="project" value="UniProtKB-UniRule"/>
</dbReference>
<dbReference type="GO" id="GO:0046872">
    <property type="term" value="F:metal ion binding"/>
    <property type="evidence" value="ECO:0007669"/>
    <property type="project" value="UniProtKB-KW"/>
</dbReference>
<dbReference type="GO" id="GO:0019843">
    <property type="term" value="F:rRNA binding"/>
    <property type="evidence" value="ECO:0007669"/>
    <property type="project" value="UniProtKB-KW"/>
</dbReference>
<dbReference type="GO" id="GO:0042274">
    <property type="term" value="P:ribosomal small subunit biogenesis"/>
    <property type="evidence" value="ECO:0007669"/>
    <property type="project" value="UniProtKB-UniRule"/>
</dbReference>
<dbReference type="CDD" id="cd01854">
    <property type="entry name" value="YjeQ_EngC"/>
    <property type="match status" value="1"/>
</dbReference>
<dbReference type="Gene3D" id="3.40.50.300">
    <property type="entry name" value="P-loop containing nucleotide triphosphate hydrolases"/>
    <property type="match status" value="1"/>
</dbReference>
<dbReference type="Gene3D" id="1.10.40.50">
    <property type="entry name" value="Probable gtpase engc, domain 3"/>
    <property type="match status" value="1"/>
</dbReference>
<dbReference type="HAMAP" id="MF_01820">
    <property type="entry name" value="GTPase_RsgA"/>
    <property type="match status" value="1"/>
</dbReference>
<dbReference type="InterPro" id="IPR030378">
    <property type="entry name" value="G_CP_dom"/>
</dbReference>
<dbReference type="InterPro" id="IPR027417">
    <property type="entry name" value="P-loop_NTPase"/>
</dbReference>
<dbReference type="InterPro" id="IPR004881">
    <property type="entry name" value="Ribosome_biogen_GTPase_RsgA"/>
</dbReference>
<dbReference type="InterPro" id="IPR010914">
    <property type="entry name" value="RsgA_GTPase_dom"/>
</dbReference>
<dbReference type="NCBIfam" id="TIGR00157">
    <property type="entry name" value="ribosome small subunit-dependent GTPase A"/>
    <property type="match status" value="1"/>
</dbReference>
<dbReference type="PANTHER" id="PTHR32120">
    <property type="entry name" value="SMALL RIBOSOMAL SUBUNIT BIOGENESIS GTPASE RSGA"/>
    <property type="match status" value="1"/>
</dbReference>
<dbReference type="PANTHER" id="PTHR32120:SF11">
    <property type="entry name" value="SMALL RIBOSOMAL SUBUNIT BIOGENESIS GTPASE RSGA 1, MITOCHONDRIAL-RELATED"/>
    <property type="match status" value="1"/>
</dbReference>
<dbReference type="Pfam" id="PF03193">
    <property type="entry name" value="RsgA_GTPase"/>
    <property type="match status" value="1"/>
</dbReference>
<dbReference type="SUPFAM" id="SSF52540">
    <property type="entry name" value="P-loop containing nucleoside triphosphate hydrolases"/>
    <property type="match status" value="1"/>
</dbReference>
<dbReference type="PROSITE" id="PS50936">
    <property type="entry name" value="ENGC_GTPASE"/>
    <property type="match status" value="1"/>
</dbReference>
<dbReference type="PROSITE" id="PS51721">
    <property type="entry name" value="G_CP"/>
    <property type="match status" value="1"/>
</dbReference>
<proteinExistence type="inferred from homology"/>
<sequence>MRAKITSVIVNNFYVYIYDLKIETKAIPKGIFKHDSHELKPMVGDDIEVELVDGVYLIVKIYDRYNQLIRPKVANVDIVLVVASIVQPDLNTLTLNKYLAFYEARNVKNVAIGLSKYDLASDSLKQKVDQLILDYQRNNYKVFVLTNEHDISLLKKFIKKHTLCLAGNSGVGKSTLINKLDPSIKQRTQEISQFLNRGKHTTTSTKLISFANGFLVDTPGFGNLEVNLTKNEMANAFSDFANYARFCKFSNCLHIDEPHCAIKKAVNDDQIVNWRYDDYLKIMKKLPNDVLEIKTRNQNKK</sequence>
<accession>B5ZB25</accession>
<protein>
    <recommendedName>
        <fullName evidence="1">Small ribosomal subunit biogenesis GTPase RsgA</fullName>
        <ecNumber evidence="1">3.6.1.-</ecNumber>
    </recommendedName>
</protein>
<keyword id="KW-0963">Cytoplasm</keyword>
<keyword id="KW-0342">GTP-binding</keyword>
<keyword id="KW-0378">Hydrolase</keyword>
<keyword id="KW-0479">Metal-binding</keyword>
<keyword id="KW-0547">Nucleotide-binding</keyword>
<keyword id="KW-0690">Ribosome biogenesis</keyword>
<keyword id="KW-0694">RNA-binding</keyword>
<keyword id="KW-0699">rRNA-binding</keyword>
<keyword id="KW-0862">Zinc</keyword>